<comment type="function">
    <text>Produces ATP from ADP in the presence of a proton gradient across the membrane. The alpha chain is a regulatory subunit.</text>
</comment>
<comment type="catalytic activity">
    <reaction evidence="1">
        <text>ATP + H2O + 4 H(+)(in) = ADP + phosphate + 5 H(+)(out)</text>
        <dbReference type="Rhea" id="RHEA:57720"/>
        <dbReference type="ChEBI" id="CHEBI:15377"/>
        <dbReference type="ChEBI" id="CHEBI:15378"/>
        <dbReference type="ChEBI" id="CHEBI:30616"/>
        <dbReference type="ChEBI" id="CHEBI:43474"/>
        <dbReference type="ChEBI" id="CHEBI:456216"/>
        <dbReference type="EC" id="7.1.2.2"/>
    </reaction>
</comment>
<comment type="subunit">
    <text evidence="1">F-type ATPases have 2 components, CF(1) - the catalytic core - and CF(0) - the membrane proton channel. CF(1) has five subunits: alpha(3), beta(3), gamma(1), delta(1), epsilon(1). CF(0) has three main subunits: a(1), b(2) and c(9-12). The alpha and beta chains form an alternating ring which encloses part of the gamma chain. CF(1) is attached to CF(0) by a central stalk formed by the gamma and epsilon chains, while a peripheral stalk is formed by the delta and b chains.</text>
</comment>
<comment type="subcellular location">
    <subcellularLocation>
        <location evidence="1">Cell inner membrane</location>
        <topology evidence="1">Peripheral membrane protein</topology>
    </subcellularLocation>
</comment>
<comment type="similarity">
    <text evidence="1">Belongs to the ATPase alpha/beta chains family.</text>
</comment>
<sequence>MQQLNPSEISELIRARIAGFEGRVETRSQGTIISLSDGILRIHGLEDVMYGEMLELPGGRFGLAMNLEQDNVGAVVLGEFSGLQEGDVVKCTGRVMQVPIGKALLGRVVNALGQPVDGKGAIDAEEFDVLEKIAPGVIDRQSVDEPMQTGIKSIDAMVPIGRGQRELIIGDRQTGKTAVAVDAILNQKGKDVQCIYVAIGQKASTVAGVVRKLEEYGAMEYTTVIAANASESAAMQYLAPYAGCTMGEYFRDRGMNALIVYDDLTKQAWAYRHISLLLRRPPGREAYPGDVFYLHSRLLERAARVNADFVEKFTKGEVKGKTGSLTALPIIETQAGDVSAFVPTNVISITDGQIYLETDLFNAGIRPAINAGLSVSRVGGAAQTKIIKKLGGGIRLDLAQYRELAAFAQFASDLDEITRKQIERGKRVTELLKQDQFSPMSVADEGAALFAASSGALDDVEVANVRPFEKALLAYLNSNNKELMAGIEEKKDLTDDLKKQLDAAVKQFKSGSTY</sequence>
<protein>
    <recommendedName>
        <fullName evidence="1">ATP synthase subunit alpha</fullName>
        <ecNumber evidence="1">7.1.2.2</ecNumber>
    </recommendedName>
    <alternativeName>
        <fullName evidence="1">ATP synthase F1 sector subunit alpha</fullName>
    </alternativeName>
    <alternativeName>
        <fullName evidence="1">F-ATPase subunit alpha</fullName>
    </alternativeName>
</protein>
<keyword id="KW-0066">ATP synthesis</keyword>
<keyword id="KW-0067">ATP-binding</keyword>
<keyword id="KW-0997">Cell inner membrane</keyword>
<keyword id="KW-1003">Cell membrane</keyword>
<keyword id="KW-0139">CF(1)</keyword>
<keyword id="KW-0375">Hydrogen ion transport</keyword>
<keyword id="KW-0406">Ion transport</keyword>
<keyword id="KW-0472">Membrane</keyword>
<keyword id="KW-0547">Nucleotide-binding</keyword>
<keyword id="KW-1278">Translocase</keyword>
<keyword id="KW-0813">Transport</keyword>
<evidence type="ECO:0000255" key="1">
    <source>
        <dbReference type="HAMAP-Rule" id="MF_01346"/>
    </source>
</evidence>
<dbReference type="EC" id="7.1.2.2" evidence="1"/>
<dbReference type="EMBL" id="M81087">
    <property type="protein sequence ID" value="AAA53125.1"/>
    <property type="molecule type" value="Genomic_DNA"/>
</dbReference>
<dbReference type="SMR" id="P41167"/>
<dbReference type="GO" id="GO:0005886">
    <property type="term" value="C:plasma membrane"/>
    <property type="evidence" value="ECO:0007669"/>
    <property type="project" value="UniProtKB-SubCell"/>
</dbReference>
<dbReference type="GO" id="GO:0045259">
    <property type="term" value="C:proton-transporting ATP synthase complex"/>
    <property type="evidence" value="ECO:0007669"/>
    <property type="project" value="UniProtKB-KW"/>
</dbReference>
<dbReference type="GO" id="GO:0043531">
    <property type="term" value="F:ADP binding"/>
    <property type="evidence" value="ECO:0007669"/>
    <property type="project" value="TreeGrafter"/>
</dbReference>
<dbReference type="GO" id="GO:0005524">
    <property type="term" value="F:ATP binding"/>
    <property type="evidence" value="ECO:0007669"/>
    <property type="project" value="UniProtKB-UniRule"/>
</dbReference>
<dbReference type="GO" id="GO:0046933">
    <property type="term" value="F:proton-transporting ATP synthase activity, rotational mechanism"/>
    <property type="evidence" value="ECO:0007669"/>
    <property type="project" value="UniProtKB-UniRule"/>
</dbReference>
<dbReference type="CDD" id="cd18113">
    <property type="entry name" value="ATP-synt_F1_alpha_C"/>
    <property type="match status" value="1"/>
</dbReference>
<dbReference type="CDD" id="cd18116">
    <property type="entry name" value="ATP-synt_F1_alpha_N"/>
    <property type="match status" value="1"/>
</dbReference>
<dbReference type="CDD" id="cd01132">
    <property type="entry name" value="F1-ATPase_alpha_CD"/>
    <property type="match status" value="1"/>
</dbReference>
<dbReference type="FunFam" id="1.20.150.20:FF:000001">
    <property type="entry name" value="ATP synthase subunit alpha"/>
    <property type="match status" value="1"/>
</dbReference>
<dbReference type="FunFam" id="2.40.30.20:FF:000001">
    <property type="entry name" value="ATP synthase subunit alpha"/>
    <property type="match status" value="1"/>
</dbReference>
<dbReference type="FunFam" id="3.40.50.300:FF:000002">
    <property type="entry name" value="ATP synthase subunit alpha"/>
    <property type="match status" value="1"/>
</dbReference>
<dbReference type="Gene3D" id="2.40.30.20">
    <property type="match status" value="1"/>
</dbReference>
<dbReference type="Gene3D" id="1.20.150.20">
    <property type="entry name" value="ATP synthase alpha/beta chain, C-terminal domain"/>
    <property type="match status" value="1"/>
</dbReference>
<dbReference type="Gene3D" id="3.40.50.300">
    <property type="entry name" value="P-loop containing nucleotide triphosphate hydrolases"/>
    <property type="match status" value="1"/>
</dbReference>
<dbReference type="HAMAP" id="MF_01346">
    <property type="entry name" value="ATP_synth_alpha_bact"/>
    <property type="match status" value="1"/>
</dbReference>
<dbReference type="InterPro" id="IPR023366">
    <property type="entry name" value="ATP_synth_asu-like_sf"/>
</dbReference>
<dbReference type="InterPro" id="IPR000793">
    <property type="entry name" value="ATP_synth_asu_C"/>
</dbReference>
<dbReference type="InterPro" id="IPR038376">
    <property type="entry name" value="ATP_synth_asu_C_sf"/>
</dbReference>
<dbReference type="InterPro" id="IPR033732">
    <property type="entry name" value="ATP_synth_F1_a_nt-bd_dom"/>
</dbReference>
<dbReference type="InterPro" id="IPR005294">
    <property type="entry name" value="ATP_synth_F1_asu"/>
</dbReference>
<dbReference type="InterPro" id="IPR020003">
    <property type="entry name" value="ATPase_a/bsu_AS"/>
</dbReference>
<dbReference type="InterPro" id="IPR004100">
    <property type="entry name" value="ATPase_F1/V1/A1_a/bsu_N"/>
</dbReference>
<dbReference type="InterPro" id="IPR036121">
    <property type="entry name" value="ATPase_F1/V1/A1_a/bsu_N_sf"/>
</dbReference>
<dbReference type="InterPro" id="IPR000194">
    <property type="entry name" value="ATPase_F1/V1/A1_a/bsu_nucl-bd"/>
</dbReference>
<dbReference type="InterPro" id="IPR027417">
    <property type="entry name" value="P-loop_NTPase"/>
</dbReference>
<dbReference type="NCBIfam" id="TIGR00962">
    <property type="entry name" value="atpA"/>
    <property type="match status" value="1"/>
</dbReference>
<dbReference type="NCBIfam" id="NF009884">
    <property type="entry name" value="PRK13343.1"/>
    <property type="match status" value="1"/>
</dbReference>
<dbReference type="PANTHER" id="PTHR48082">
    <property type="entry name" value="ATP SYNTHASE SUBUNIT ALPHA, MITOCHONDRIAL"/>
    <property type="match status" value="1"/>
</dbReference>
<dbReference type="PANTHER" id="PTHR48082:SF2">
    <property type="entry name" value="ATP SYNTHASE SUBUNIT ALPHA, MITOCHONDRIAL"/>
    <property type="match status" value="1"/>
</dbReference>
<dbReference type="Pfam" id="PF00006">
    <property type="entry name" value="ATP-synt_ab"/>
    <property type="match status" value="1"/>
</dbReference>
<dbReference type="Pfam" id="PF00306">
    <property type="entry name" value="ATP-synt_ab_C"/>
    <property type="match status" value="1"/>
</dbReference>
<dbReference type="Pfam" id="PF02874">
    <property type="entry name" value="ATP-synt_ab_N"/>
    <property type="match status" value="1"/>
</dbReference>
<dbReference type="PIRSF" id="PIRSF039088">
    <property type="entry name" value="F_ATPase_subunit_alpha"/>
    <property type="match status" value="1"/>
</dbReference>
<dbReference type="SUPFAM" id="SSF47917">
    <property type="entry name" value="C-terminal domain of alpha and beta subunits of F1 ATP synthase"/>
    <property type="match status" value="1"/>
</dbReference>
<dbReference type="SUPFAM" id="SSF50615">
    <property type="entry name" value="N-terminal domain of alpha and beta subunits of F1 ATP synthase"/>
    <property type="match status" value="1"/>
</dbReference>
<dbReference type="SUPFAM" id="SSF52540">
    <property type="entry name" value="P-loop containing nucleoside triphosphate hydrolases"/>
    <property type="match status" value="1"/>
</dbReference>
<dbReference type="PROSITE" id="PS00152">
    <property type="entry name" value="ATPASE_ALPHA_BETA"/>
    <property type="match status" value="1"/>
</dbReference>
<reference key="1">
    <citation type="journal article" date="1994" name="FEMS Microbiol. Lett.">
        <title>The F1 genes of the F1F0 ATP synthase from the acidophilic bacterium Thiobacillus ferrooxidans complement Escherichia coli F1 unc mutants.</title>
        <authorList>
            <person name="Brown L.D."/>
            <person name="Dennehy M.E."/>
            <person name="Rawlings D.E."/>
        </authorList>
    </citation>
    <scope>NUCLEOTIDE SEQUENCE [GENOMIC DNA]</scope>
    <source>
        <strain>ATCC 33020 / DSM 29468 / JCM 18981 / 11Fe</strain>
    </source>
</reference>
<organism>
    <name type="scientific">Acidithiobacillus ferridurans</name>
    <dbReference type="NCBI Taxonomy" id="1232575"/>
    <lineage>
        <taxon>Bacteria</taxon>
        <taxon>Pseudomonadati</taxon>
        <taxon>Pseudomonadota</taxon>
        <taxon>Acidithiobacillia</taxon>
        <taxon>Acidithiobacillales</taxon>
        <taxon>Acidithiobacillaceae</taxon>
        <taxon>Acidithiobacillus</taxon>
    </lineage>
</organism>
<name>ATPA_ACIFI</name>
<feature type="chain" id="PRO_0000144363" description="ATP synthase subunit alpha">
    <location>
        <begin position="1"/>
        <end position="514"/>
    </location>
</feature>
<feature type="binding site" evidence="1">
    <location>
        <begin position="170"/>
        <end position="177"/>
    </location>
    <ligand>
        <name>ATP</name>
        <dbReference type="ChEBI" id="CHEBI:30616"/>
    </ligand>
</feature>
<feature type="site" description="Required for activity" evidence="1">
    <location>
        <position position="374"/>
    </location>
</feature>
<accession>P41167</accession>
<gene>
    <name evidence="1" type="primary">atpA</name>
</gene>
<proteinExistence type="inferred from homology"/>